<comment type="function">
    <text>Functions in post-Golgi recycling pathways. Acts as a recycling carrier to the cell surface.</text>
</comment>
<comment type="subunit">
    <text evidence="2 5">Interacts with NEDD4 and NEDD4L and TSG101 (By similarity). Interacts with RNF126.</text>
</comment>
<comment type="subcellular location">
    <subcellularLocation>
        <location>Membrane</location>
        <topology>Multi-pass membrane protein</topology>
    </subcellularLocation>
</comment>
<comment type="PTM">
    <text evidence="1">Monoubiquitinated.</text>
</comment>
<comment type="similarity">
    <text evidence="6">Belongs to the SCAMP family.</text>
</comment>
<evidence type="ECO:0000250" key="1"/>
<evidence type="ECO:0000250" key="2">
    <source>
        <dbReference type="UniProtKB" id="O14828"/>
    </source>
</evidence>
<evidence type="ECO:0000255" key="3"/>
<evidence type="ECO:0000256" key="4">
    <source>
        <dbReference type="SAM" id="MobiDB-lite"/>
    </source>
</evidence>
<evidence type="ECO:0000269" key="5">
    <source>
    </source>
</evidence>
<evidence type="ECO:0000305" key="6"/>
<evidence type="ECO:0007744" key="7">
    <source>
    </source>
</evidence>
<evidence type="ECO:0007744" key="8">
    <source>
    </source>
</evidence>
<reference key="1">
    <citation type="journal article" date="1997" name="J. Cell Sci.">
        <title>Three mammalian SCAMPs (secretory carrier membrane proteins) are highly related products of distinct genes having similar subcellular distributions.</title>
        <authorList>
            <person name="Singleton D.R."/>
            <person name="Wu T.T."/>
            <person name="Castle J.D."/>
        </authorList>
    </citation>
    <scope>NUCLEOTIDE SEQUENCE [MRNA]</scope>
</reference>
<reference key="2">
    <citation type="journal article" date="2000" name="J. Neurosci.">
        <title>Novel SCAMPs lacking NPF repeats: ubiquitous and synaptic vesicle-specific forms implicate SCAMPs in multiple membrane-trafficking functions.</title>
        <authorList>
            <person name="Fernandez-Chacon R."/>
            <person name="Suedhof T.C."/>
        </authorList>
    </citation>
    <scope>NUCLEOTIDE SEQUENCE [MRNA]</scope>
</reference>
<reference key="3">
    <citation type="journal article" date="2005" name="Science">
        <title>The transcriptional landscape of the mammalian genome.</title>
        <authorList>
            <person name="Carninci P."/>
            <person name="Kasukawa T."/>
            <person name="Katayama S."/>
            <person name="Gough J."/>
            <person name="Frith M.C."/>
            <person name="Maeda N."/>
            <person name="Oyama R."/>
            <person name="Ravasi T."/>
            <person name="Lenhard B."/>
            <person name="Wells C."/>
            <person name="Kodzius R."/>
            <person name="Shimokawa K."/>
            <person name="Bajic V.B."/>
            <person name="Brenner S.E."/>
            <person name="Batalov S."/>
            <person name="Forrest A.R."/>
            <person name="Zavolan M."/>
            <person name="Davis M.J."/>
            <person name="Wilming L.G."/>
            <person name="Aidinis V."/>
            <person name="Allen J.E."/>
            <person name="Ambesi-Impiombato A."/>
            <person name="Apweiler R."/>
            <person name="Aturaliya R.N."/>
            <person name="Bailey T.L."/>
            <person name="Bansal M."/>
            <person name="Baxter L."/>
            <person name="Beisel K.W."/>
            <person name="Bersano T."/>
            <person name="Bono H."/>
            <person name="Chalk A.M."/>
            <person name="Chiu K.P."/>
            <person name="Choudhary V."/>
            <person name="Christoffels A."/>
            <person name="Clutterbuck D.R."/>
            <person name="Crowe M.L."/>
            <person name="Dalla E."/>
            <person name="Dalrymple B.P."/>
            <person name="de Bono B."/>
            <person name="Della Gatta G."/>
            <person name="di Bernardo D."/>
            <person name="Down T."/>
            <person name="Engstrom P."/>
            <person name="Fagiolini M."/>
            <person name="Faulkner G."/>
            <person name="Fletcher C.F."/>
            <person name="Fukushima T."/>
            <person name="Furuno M."/>
            <person name="Futaki S."/>
            <person name="Gariboldi M."/>
            <person name="Georgii-Hemming P."/>
            <person name="Gingeras T.R."/>
            <person name="Gojobori T."/>
            <person name="Green R.E."/>
            <person name="Gustincich S."/>
            <person name="Harbers M."/>
            <person name="Hayashi Y."/>
            <person name="Hensch T.K."/>
            <person name="Hirokawa N."/>
            <person name="Hill D."/>
            <person name="Huminiecki L."/>
            <person name="Iacono M."/>
            <person name="Ikeo K."/>
            <person name="Iwama A."/>
            <person name="Ishikawa T."/>
            <person name="Jakt M."/>
            <person name="Kanapin A."/>
            <person name="Katoh M."/>
            <person name="Kawasawa Y."/>
            <person name="Kelso J."/>
            <person name="Kitamura H."/>
            <person name="Kitano H."/>
            <person name="Kollias G."/>
            <person name="Krishnan S.P."/>
            <person name="Kruger A."/>
            <person name="Kummerfeld S.K."/>
            <person name="Kurochkin I.V."/>
            <person name="Lareau L.F."/>
            <person name="Lazarevic D."/>
            <person name="Lipovich L."/>
            <person name="Liu J."/>
            <person name="Liuni S."/>
            <person name="McWilliam S."/>
            <person name="Madan Babu M."/>
            <person name="Madera M."/>
            <person name="Marchionni L."/>
            <person name="Matsuda H."/>
            <person name="Matsuzawa S."/>
            <person name="Miki H."/>
            <person name="Mignone F."/>
            <person name="Miyake S."/>
            <person name="Morris K."/>
            <person name="Mottagui-Tabar S."/>
            <person name="Mulder N."/>
            <person name="Nakano N."/>
            <person name="Nakauchi H."/>
            <person name="Ng P."/>
            <person name="Nilsson R."/>
            <person name="Nishiguchi S."/>
            <person name="Nishikawa S."/>
            <person name="Nori F."/>
            <person name="Ohara O."/>
            <person name="Okazaki Y."/>
            <person name="Orlando V."/>
            <person name="Pang K.C."/>
            <person name="Pavan W.J."/>
            <person name="Pavesi G."/>
            <person name="Pesole G."/>
            <person name="Petrovsky N."/>
            <person name="Piazza S."/>
            <person name="Reed J."/>
            <person name="Reid J.F."/>
            <person name="Ring B.Z."/>
            <person name="Ringwald M."/>
            <person name="Rost B."/>
            <person name="Ruan Y."/>
            <person name="Salzberg S.L."/>
            <person name="Sandelin A."/>
            <person name="Schneider C."/>
            <person name="Schoenbach C."/>
            <person name="Sekiguchi K."/>
            <person name="Semple C.A."/>
            <person name="Seno S."/>
            <person name="Sessa L."/>
            <person name="Sheng Y."/>
            <person name="Shibata Y."/>
            <person name="Shimada H."/>
            <person name="Shimada K."/>
            <person name="Silva D."/>
            <person name="Sinclair B."/>
            <person name="Sperling S."/>
            <person name="Stupka E."/>
            <person name="Sugiura K."/>
            <person name="Sultana R."/>
            <person name="Takenaka Y."/>
            <person name="Taki K."/>
            <person name="Tammoja K."/>
            <person name="Tan S.L."/>
            <person name="Tang S."/>
            <person name="Taylor M.S."/>
            <person name="Tegner J."/>
            <person name="Teichmann S.A."/>
            <person name="Ueda H.R."/>
            <person name="van Nimwegen E."/>
            <person name="Verardo R."/>
            <person name="Wei C.L."/>
            <person name="Yagi K."/>
            <person name="Yamanishi H."/>
            <person name="Zabarovsky E."/>
            <person name="Zhu S."/>
            <person name="Zimmer A."/>
            <person name="Hide W."/>
            <person name="Bult C."/>
            <person name="Grimmond S.M."/>
            <person name="Teasdale R.D."/>
            <person name="Liu E.T."/>
            <person name="Brusic V."/>
            <person name="Quackenbush J."/>
            <person name="Wahlestedt C."/>
            <person name="Mattick J.S."/>
            <person name="Hume D.A."/>
            <person name="Kai C."/>
            <person name="Sasaki D."/>
            <person name="Tomaru Y."/>
            <person name="Fukuda S."/>
            <person name="Kanamori-Katayama M."/>
            <person name="Suzuki M."/>
            <person name="Aoki J."/>
            <person name="Arakawa T."/>
            <person name="Iida J."/>
            <person name="Imamura K."/>
            <person name="Itoh M."/>
            <person name="Kato T."/>
            <person name="Kawaji H."/>
            <person name="Kawagashira N."/>
            <person name="Kawashima T."/>
            <person name="Kojima M."/>
            <person name="Kondo S."/>
            <person name="Konno H."/>
            <person name="Nakano K."/>
            <person name="Ninomiya N."/>
            <person name="Nishio T."/>
            <person name="Okada M."/>
            <person name="Plessy C."/>
            <person name="Shibata K."/>
            <person name="Shiraki T."/>
            <person name="Suzuki S."/>
            <person name="Tagami M."/>
            <person name="Waki K."/>
            <person name="Watahiki A."/>
            <person name="Okamura-Oho Y."/>
            <person name="Suzuki H."/>
            <person name="Kawai J."/>
            <person name="Hayashizaki Y."/>
        </authorList>
    </citation>
    <scope>NUCLEOTIDE SEQUENCE [LARGE SCALE MRNA]</scope>
    <source>
        <strain>C57BL/6J</strain>
    </source>
</reference>
<reference key="4">
    <citation type="submission" date="2005-09" db="EMBL/GenBank/DDBJ databases">
        <authorList>
            <person name="Mural R.J."/>
            <person name="Adams M.D."/>
            <person name="Myers E.W."/>
            <person name="Smith H.O."/>
            <person name="Venter J.C."/>
        </authorList>
    </citation>
    <scope>NUCLEOTIDE SEQUENCE [LARGE SCALE GENOMIC DNA]</scope>
</reference>
<reference key="5">
    <citation type="journal article" date="2004" name="Genome Res.">
        <title>The status, quality, and expansion of the NIH full-length cDNA project: the Mammalian Gene Collection (MGC).</title>
        <authorList>
            <consortium name="The MGC Project Team"/>
        </authorList>
    </citation>
    <scope>NUCLEOTIDE SEQUENCE [LARGE SCALE MRNA]</scope>
</reference>
<reference key="6">
    <citation type="journal article" date="2009" name="Immunity">
        <title>The phagosomal proteome in interferon-gamma-activated macrophages.</title>
        <authorList>
            <person name="Trost M."/>
            <person name="English L."/>
            <person name="Lemieux S."/>
            <person name="Courcelles M."/>
            <person name="Desjardins M."/>
            <person name="Thibault P."/>
        </authorList>
    </citation>
    <scope>PHOSPHORYLATION [LARGE SCALE ANALYSIS] AT SER-78</scope>
    <scope>IDENTIFICATION BY MASS SPECTROMETRY [LARGE SCALE ANALYSIS]</scope>
</reference>
<reference key="7">
    <citation type="journal article" date="2010" name="Cell">
        <title>A tissue-specific atlas of mouse protein phosphorylation and expression.</title>
        <authorList>
            <person name="Huttlin E.L."/>
            <person name="Jedrychowski M.P."/>
            <person name="Elias J.E."/>
            <person name="Goswami T."/>
            <person name="Rad R."/>
            <person name="Beausoleil S.A."/>
            <person name="Villen J."/>
            <person name="Haas W."/>
            <person name="Sowa M.E."/>
            <person name="Gygi S.P."/>
        </authorList>
    </citation>
    <scope>PHOSPHORYLATION [LARGE SCALE ANALYSIS] AT TYR-85</scope>
    <scope>IDENTIFICATION BY MASS SPECTROMETRY [LARGE SCALE ANALYSIS]</scope>
    <source>
        <tissue>Brain</tissue>
        <tissue>Brown adipose tissue</tissue>
        <tissue>Heart</tissue>
        <tissue>Kidney</tissue>
        <tissue>Liver</tissue>
        <tissue>Lung</tissue>
        <tissue>Pancreas</tissue>
        <tissue>Spleen</tissue>
        <tissue>Testis</tissue>
    </source>
</reference>
<reference key="8">
    <citation type="journal article" date="2013" name="J. Cell Sci.">
        <title>The E3 ubiquitin ligases RNF126 and Rabring7 regulate endosomal sorting of the epidermal growth factor receptor.</title>
        <authorList>
            <person name="Smith C.J."/>
            <person name="Berry D.M."/>
            <person name="McGlade C.J."/>
        </authorList>
    </citation>
    <scope>INTERACTION WITH RNF126</scope>
</reference>
<protein>
    <recommendedName>
        <fullName>Secretory carrier-associated membrane protein 3</fullName>
        <shortName>Secretory carrier membrane protein 3</shortName>
    </recommendedName>
</protein>
<name>SCAM3_MOUSE</name>
<sequence length="349" mass="38458">MAQSRDTGNPFPDSGELDNPFQDPAVIQHRPSQQYATLDVYNPFENREPPPAYEPPAPAPAPLPPPSAPSVQSSRKLSPTEPRNYGSYSTQASAAAATAELLKKQEELNRKAEELDRRERELQHVALGGAGTRQNNWPPLPSFCPVKPCFFQDISMEIPQEFQKTVSTMYYLWMCSTLALLLNFFACLARFCVDTGSGSGFGLSMLWLLLFTPCSFVCWYRPMYKAFRSDSSFNFFVFFFIFFVQDVFFVLQAIGIPGWGFSGWVTALVVVGSKPAVAVLMLLVALLFTGIAVLGIVMLKRIHSLYRQTGASFQKAQQEFAAGVFSNPAVRTAAANAAAGAAENAFRAP</sequence>
<organism>
    <name type="scientific">Mus musculus</name>
    <name type="common">Mouse</name>
    <dbReference type="NCBI Taxonomy" id="10090"/>
    <lineage>
        <taxon>Eukaryota</taxon>
        <taxon>Metazoa</taxon>
        <taxon>Chordata</taxon>
        <taxon>Craniata</taxon>
        <taxon>Vertebrata</taxon>
        <taxon>Euteleostomi</taxon>
        <taxon>Mammalia</taxon>
        <taxon>Eutheria</taxon>
        <taxon>Euarchontoglires</taxon>
        <taxon>Glires</taxon>
        <taxon>Rodentia</taxon>
        <taxon>Myomorpha</taxon>
        <taxon>Muroidea</taxon>
        <taxon>Muridae</taxon>
        <taxon>Murinae</taxon>
        <taxon>Mus</taxon>
        <taxon>Mus</taxon>
    </lineage>
</organism>
<keyword id="KW-1017">Isopeptide bond</keyword>
<keyword id="KW-0472">Membrane</keyword>
<keyword id="KW-0597">Phosphoprotein</keyword>
<keyword id="KW-0653">Protein transport</keyword>
<keyword id="KW-1185">Reference proteome</keyword>
<keyword id="KW-0812">Transmembrane</keyword>
<keyword id="KW-1133">Transmembrane helix</keyword>
<keyword id="KW-0813">Transport</keyword>
<keyword id="KW-0832">Ubl conjugation</keyword>
<dbReference type="EMBL" id="AF005036">
    <property type="protein sequence ID" value="AAB62721.1"/>
    <property type="molecule type" value="mRNA"/>
</dbReference>
<dbReference type="EMBL" id="AF295403">
    <property type="protein sequence ID" value="AAG22800.1"/>
    <property type="molecule type" value="mRNA"/>
</dbReference>
<dbReference type="EMBL" id="AK160549">
    <property type="protein sequence ID" value="BAE35865.1"/>
    <property type="molecule type" value="mRNA"/>
</dbReference>
<dbReference type="EMBL" id="CH466547">
    <property type="protein sequence ID" value="EDL15232.1"/>
    <property type="molecule type" value="Genomic_DNA"/>
</dbReference>
<dbReference type="EMBL" id="BC002021">
    <property type="protein sequence ID" value="AAH02021.1"/>
    <property type="molecule type" value="mRNA"/>
</dbReference>
<dbReference type="CCDS" id="CCDS50959.1"/>
<dbReference type="RefSeq" id="NP_001296838.1">
    <property type="nucleotide sequence ID" value="NM_001309909.1"/>
</dbReference>
<dbReference type="RefSeq" id="NP_001296839.1">
    <property type="nucleotide sequence ID" value="NM_001309910.1"/>
</dbReference>
<dbReference type="RefSeq" id="NP_036016.2">
    <property type="nucleotide sequence ID" value="NM_011886.3"/>
</dbReference>
<dbReference type="SMR" id="O35609"/>
<dbReference type="BioGRID" id="204860">
    <property type="interactions" value="8"/>
</dbReference>
<dbReference type="FunCoup" id="O35609">
    <property type="interactions" value="3120"/>
</dbReference>
<dbReference type="IntAct" id="O35609">
    <property type="interactions" value="1"/>
</dbReference>
<dbReference type="STRING" id="10090.ENSMUSP00000112846"/>
<dbReference type="iPTMnet" id="O35609"/>
<dbReference type="PhosphoSitePlus" id="O35609"/>
<dbReference type="SwissPalm" id="O35609"/>
<dbReference type="jPOST" id="O35609"/>
<dbReference type="PaxDb" id="10090-ENSMUSP00000029684"/>
<dbReference type="ProteomicsDB" id="256710"/>
<dbReference type="Pumba" id="O35609"/>
<dbReference type="Antibodypedia" id="20415">
    <property type="antibodies" value="141 antibodies from 25 providers"/>
</dbReference>
<dbReference type="DNASU" id="24045"/>
<dbReference type="Ensembl" id="ENSMUST00000029684.15">
    <property type="protein sequence ID" value="ENSMUSP00000029684.9"/>
    <property type="gene ID" value="ENSMUSG00000028049.16"/>
</dbReference>
<dbReference type="GeneID" id="24045"/>
<dbReference type="KEGG" id="mmu:24045"/>
<dbReference type="UCSC" id="uc008pxw.1">
    <property type="organism name" value="mouse"/>
</dbReference>
<dbReference type="AGR" id="MGI:1346346"/>
<dbReference type="CTD" id="10067"/>
<dbReference type="MGI" id="MGI:1346346">
    <property type="gene designation" value="Scamp3"/>
</dbReference>
<dbReference type="VEuPathDB" id="HostDB:ENSMUSG00000028049"/>
<dbReference type="eggNOG" id="KOG3088">
    <property type="taxonomic scope" value="Eukaryota"/>
</dbReference>
<dbReference type="GeneTree" id="ENSGT00940000160917"/>
<dbReference type="HOGENOM" id="CLU_066546_0_0_1"/>
<dbReference type="InParanoid" id="O35609"/>
<dbReference type="OMA" id="IFFAQVC"/>
<dbReference type="OrthoDB" id="1924787at2759"/>
<dbReference type="TreeFam" id="TF313797"/>
<dbReference type="BioGRID-ORCS" id="24045">
    <property type="hits" value="6 hits in 78 CRISPR screens"/>
</dbReference>
<dbReference type="PRO" id="PR:O35609"/>
<dbReference type="Proteomes" id="UP000000589">
    <property type="component" value="Chromosome 3"/>
</dbReference>
<dbReference type="RNAct" id="O35609">
    <property type="molecule type" value="protein"/>
</dbReference>
<dbReference type="Bgee" id="ENSMUSG00000028049">
    <property type="expression patterns" value="Expressed in yolk sac and 268 other cell types or tissues"/>
</dbReference>
<dbReference type="ExpressionAtlas" id="O35609">
    <property type="expression patterns" value="baseline and differential"/>
</dbReference>
<dbReference type="GO" id="GO:0000139">
    <property type="term" value="C:Golgi membrane"/>
    <property type="evidence" value="ECO:0000314"/>
    <property type="project" value="MGI"/>
</dbReference>
<dbReference type="GO" id="GO:0006886">
    <property type="term" value="P:intracellular protein transport"/>
    <property type="evidence" value="ECO:0000304"/>
    <property type="project" value="MGI"/>
</dbReference>
<dbReference type="GO" id="GO:0032526">
    <property type="term" value="P:response to retinoic acid"/>
    <property type="evidence" value="ECO:0000314"/>
    <property type="project" value="MGI"/>
</dbReference>
<dbReference type="InterPro" id="IPR007273">
    <property type="entry name" value="SCAMP"/>
</dbReference>
<dbReference type="PANTHER" id="PTHR10687:SF6">
    <property type="entry name" value="SECRETORY CARRIER-ASSOCIATED MEMBRANE PROTEIN 3"/>
    <property type="match status" value="1"/>
</dbReference>
<dbReference type="PANTHER" id="PTHR10687">
    <property type="entry name" value="SECRETORY CARRIER-ASSOCIATED MEMBRANE PROTEIN SCAMP"/>
    <property type="match status" value="1"/>
</dbReference>
<dbReference type="Pfam" id="PF04144">
    <property type="entry name" value="SCAMP"/>
    <property type="match status" value="1"/>
</dbReference>
<accession>O35609</accession>
<accession>Q3TUV6</accession>
<accession>Q99M48</accession>
<accession>Q9ERM9</accession>
<proteinExistence type="evidence at protein level"/>
<feature type="chain" id="PRO_0000191258" description="Secretory carrier-associated membrane protein 3">
    <location>
        <begin position="1"/>
        <end position="349"/>
    </location>
</feature>
<feature type="topological domain" description="Cytoplasmic" evidence="3">
    <location>
        <begin position="1"/>
        <end position="168"/>
    </location>
</feature>
<feature type="transmembrane region" description="Helical" evidence="3">
    <location>
        <begin position="169"/>
        <end position="189"/>
    </location>
</feature>
<feature type="transmembrane region" description="Helical" evidence="3">
    <location>
        <begin position="200"/>
        <end position="220"/>
    </location>
</feature>
<feature type="transmembrane region" description="Helical" evidence="3">
    <location>
        <begin position="236"/>
        <end position="256"/>
    </location>
</feature>
<feature type="transmembrane region" description="Helical" evidence="3">
    <location>
        <begin position="277"/>
        <end position="297"/>
    </location>
</feature>
<feature type="topological domain" description="Cytoplasmic" evidence="3">
    <location>
        <begin position="298"/>
        <end position="349"/>
    </location>
</feature>
<feature type="region of interest" description="Disordered" evidence="4">
    <location>
        <begin position="1"/>
        <end position="90"/>
    </location>
</feature>
<feature type="compositionally biased region" description="Pro residues" evidence="4">
    <location>
        <begin position="49"/>
        <end position="68"/>
    </location>
</feature>
<feature type="modified residue" description="Phosphoserine" evidence="2">
    <location>
        <position position="32"/>
    </location>
</feature>
<feature type="modified residue" description="Phosphothreonine" evidence="2">
    <location>
        <position position="37"/>
    </location>
</feature>
<feature type="modified residue" description="Phosphotyrosine" evidence="2">
    <location>
        <position position="41"/>
    </location>
</feature>
<feature type="modified residue" description="Phosphotyrosine" evidence="2">
    <location>
        <position position="53"/>
    </location>
</feature>
<feature type="modified residue" description="Phosphoserine" evidence="2">
    <location>
        <position position="74"/>
    </location>
</feature>
<feature type="modified residue" description="Phosphoserine" evidence="7">
    <location>
        <position position="78"/>
    </location>
</feature>
<feature type="modified residue" description="Phosphotyrosine" evidence="8">
    <location>
        <position position="85"/>
    </location>
</feature>
<feature type="modified residue" description="Phosphoserine" evidence="2">
    <location>
        <position position="87"/>
    </location>
</feature>
<feature type="cross-link" description="Glycyl lysine isopeptide (Lys-Gly) (interchain with G-Cter in SUMO1)" evidence="2">
    <location>
        <position position="315"/>
    </location>
</feature>
<feature type="sequence conflict" description="In Ref. 1; AAB62721 and 2; AAG22800." evidence="6" ref="1 2">
    <original>F</original>
    <variation>S</variation>
    <location>
        <position position="11"/>
    </location>
</feature>
<feature type="sequence conflict" description="In Ref. 3; AAH02021." evidence="6" ref="3">
    <original>E</original>
    <variation>EQ</variation>
    <location>
        <position position="48"/>
    </location>
</feature>
<feature type="sequence conflict" description="In Ref. 3; AAH02021." evidence="6" ref="3">
    <original>A</original>
    <variation>S</variation>
    <location>
        <position position="61"/>
    </location>
</feature>
<feature type="sequence conflict" description="In Ref. 1; AAB62721." evidence="6" ref="1">
    <original>K</original>
    <variation>T</variation>
    <location>
        <position position="111"/>
    </location>
</feature>
<feature type="sequence conflict" description="In Ref. 1; AAB62721." evidence="6" ref="1">
    <original>V</original>
    <variation>D</variation>
    <location>
        <position position="284"/>
    </location>
</feature>
<gene>
    <name type="primary">Scamp3</name>
</gene>